<reference key="1">
    <citation type="submission" date="2005-08" db="EMBL/GenBank/DDBJ databases">
        <title>Complete sequence of Pelodictyon luteolum DSM 273.</title>
        <authorList>
            <consortium name="US DOE Joint Genome Institute"/>
            <person name="Copeland A."/>
            <person name="Lucas S."/>
            <person name="Lapidus A."/>
            <person name="Barry K."/>
            <person name="Detter J.C."/>
            <person name="Glavina T."/>
            <person name="Hammon N."/>
            <person name="Israni S."/>
            <person name="Pitluck S."/>
            <person name="Bryant D."/>
            <person name="Schmutz J."/>
            <person name="Larimer F."/>
            <person name="Land M."/>
            <person name="Kyrpides N."/>
            <person name="Ivanova N."/>
            <person name="Richardson P."/>
        </authorList>
    </citation>
    <scope>NUCLEOTIDE SEQUENCE [LARGE SCALE GENOMIC DNA]</scope>
    <source>
        <strain>DSM 273 / BCRC 81028 / 2530</strain>
    </source>
</reference>
<feature type="chain" id="PRO_0000267365" description="dTTP/UTP pyrophosphatase">
    <location>
        <begin position="1"/>
        <end position="193"/>
    </location>
</feature>
<feature type="active site" description="Proton acceptor" evidence="1">
    <location>
        <position position="75"/>
    </location>
</feature>
<feature type="site" description="Important for substrate specificity" evidence="1">
    <location>
        <position position="14"/>
    </location>
</feature>
<feature type="site" description="Important for substrate specificity" evidence="1">
    <location>
        <position position="76"/>
    </location>
</feature>
<feature type="site" description="Important for substrate specificity" evidence="1">
    <location>
        <position position="158"/>
    </location>
</feature>
<sequence>MRTPNILLASQSPRRRELLALLAIPFTAVRVDTPEQFECAASLEENVRRIAEEKAREARRLYPEESSSSIILSADTVVEHDGLILQKPQGEEEALAMLQSLQGRTHSVHTGYALLYGERKHTAMATTRVTFNAMPKREIMRYIATGSPFDKAGAYGIQDPVMASYVSGIEGCYYNVVGLPLSAVWAAIQKMVV</sequence>
<protein>
    <recommendedName>
        <fullName evidence="1">dTTP/UTP pyrophosphatase</fullName>
        <shortName evidence="1">dTTPase/UTPase</shortName>
        <ecNumber evidence="1">3.6.1.9</ecNumber>
    </recommendedName>
    <alternativeName>
        <fullName evidence="1">Nucleoside triphosphate pyrophosphatase</fullName>
    </alternativeName>
    <alternativeName>
        <fullName evidence="1">Nucleotide pyrophosphatase</fullName>
        <shortName evidence="1">Nucleotide PPase</shortName>
    </alternativeName>
</protein>
<proteinExistence type="inferred from homology"/>
<keyword id="KW-0963">Cytoplasm</keyword>
<keyword id="KW-0378">Hydrolase</keyword>
<keyword id="KW-0546">Nucleotide metabolism</keyword>
<keyword id="KW-1185">Reference proteome</keyword>
<name>NTPPA_CHLL3</name>
<evidence type="ECO:0000255" key="1">
    <source>
        <dbReference type="HAMAP-Rule" id="MF_00528"/>
    </source>
</evidence>
<gene>
    <name type="ordered locus">Plut_1179</name>
</gene>
<dbReference type="EC" id="3.6.1.9" evidence="1"/>
<dbReference type="EMBL" id="CP000096">
    <property type="protein sequence ID" value="ABB24041.1"/>
    <property type="molecule type" value="Genomic_DNA"/>
</dbReference>
<dbReference type="RefSeq" id="WP_011357913.1">
    <property type="nucleotide sequence ID" value="NC_007512.1"/>
</dbReference>
<dbReference type="SMR" id="Q3B3P0"/>
<dbReference type="STRING" id="319225.Plut_1179"/>
<dbReference type="KEGG" id="plt:Plut_1179"/>
<dbReference type="eggNOG" id="COG0424">
    <property type="taxonomic scope" value="Bacteria"/>
</dbReference>
<dbReference type="HOGENOM" id="CLU_040416_0_0_10"/>
<dbReference type="OrthoDB" id="9807767at2"/>
<dbReference type="Proteomes" id="UP000002709">
    <property type="component" value="Chromosome"/>
</dbReference>
<dbReference type="GO" id="GO:0005737">
    <property type="term" value="C:cytoplasm"/>
    <property type="evidence" value="ECO:0007669"/>
    <property type="project" value="UniProtKB-SubCell"/>
</dbReference>
<dbReference type="GO" id="GO:0036218">
    <property type="term" value="F:dTTP diphosphatase activity"/>
    <property type="evidence" value="ECO:0007669"/>
    <property type="project" value="RHEA"/>
</dbReference>
<dbReference type="GO" id="GO:0036221">
    <property type="term" value="F:UTP diphosphatase activity"/>
    <property type="evidence" value="ECO:0007669"/>
    <property type="project" value="RHEA"/>
</dbReference>
<dbReference type="GO" id="GO:0009117">
    <property type="term" value="P:nucleotide metabolic process"/>
    <property type="evidence" value="ECO:0007669"/>
    <property type="project" value="UniProtKB-KW"/>
</dbReference>
<dbReference type="CDD" id="cd00555">
    <property type="entry name" value="Maf"/>
    <property type="match status" value="1"/>
</dbReference>
<dbReference type="Gene3D" id="3.90.950.10">
    <property type="match status" value="1"/>
</dbReference>
<dbReference type="HAMAP" id="MF_00528">
    <property type="entry name" value="Maf"/>
    <property type="match status" value="1"/>
</dbReference>
<dbReference type="InterPro" id="IPR029001">
    <property type="entry name" value="ITPase-like_fam"/>
</dbReference>
<dbReference type="InterPro" id="IPR003697">
    <property type="entry name" value="Maf-like"/>
</dbReference>
<dbReference type="NCBIfam" id="TIGR00172">
    <property type="entry name" value="maf"/>
    <property type="match status" value="1"/>
</dbReference>
<dbReference type="PANTHER" id="PTHR43213">
    <property type="entry name" value="BIFUNCTIONAL DTTP/UTP PYROPHOSPHATASE/METHYLTRANSFERASE PROTEIN-RELATED"/>
    <property type="match status" value="1"/>
</dbReference>
<dbReference type="PANTHER" id="PTHR43213:SF5">
    <property type="entry name" value="BIFUNCTIONAL DTTP_UTP PYROPHOSPHATASE_METHYLTRANSFERASE PROTEIN-RELATED"/>
    <property type="match status" value="1"/>
</dbReference>
<dbReference type="Pfam" id="PF02545">
    <property type="entry name" value="Maf"/>
    <property type="match status" value="1"/>
</dbReference>
<dbReference type="PIRSF" id="PIRSF006305">
    <property type="entry name" value="Maf"/>
    <property type="match status" value="1"/>
</dbReference>
<dbReference type="SUPFAM" id="SSF52972">
    <property type="entry name" value="ITPase-like"/>
    <property type="match status" value="1"/>
</dbReference>
<comment type="function">
    <text evidence="1">Nucleoside triphosphate pyrophosphatase that hydrolyzes dTTP and UTP. May have a dual role in cell division arrest and in preventing the incorporation of modified nucleotides into cellular nucleic acids.</text>
</comment>
<comment type="catalytic activity">
    <reaction evidence="1">
        <text>dTTP + H2O = dTMP + diphosphate + H(+)</text>
        <dbReference type="Rhea" id="RHEA:28534"/>
        <dbReference type="ChEBI" id="CHEBI:15377"/>
        <dbReference type="ChEBI" id="CHEBI:15378"/>
        <dbReference type="ChEBI" id="CHEBI:33019"/>
        <dbReference type="ChEBI" id="CHEBI:37568"/>
        <dbReference type="ChEBI" id="CHEBI:63528"/>
        <dbReference type="EC" id="3.6.1.9"/>
    </reaction>
</comment>
<comment type="catalytic activity">
    <reaction evidence="1">
        <text>UTP + H2O = UMP + diphosphate + H(+)</text>
        <dbReference type="Rhea" id="RHEA:29395"/>
        <dbReference type="ChEBI" id="CHEBI:15377"/>
        <dbReference type="ChEBI" id="CHEBI:15378"/>
        <dbReference type="ChEBI" id="CHEBI:33019"/>
        <dbReference type="ChEBI" id="CHEBI:46398"/>
        <dbReference type="ChEBI" id="CHEBI:57865"/>
        <dbReference type="EC" id="3.6.1.9"/>
    </reaction>
</comment>
<comment type="cofactor">
    <cofactor evidence="1">
        <name>a divalent metal cation</name>
        <dbReference type="ChEBI" id="CHEBI:60240"/>
    </cofactor>
</comment>
<comment type="subcellular location">
    <subcellularLocation>
        <location evidence="1">Cytoplasm</location>
    </subcellularLocation>
</comment>
<comment type="similarity">
    <text evidence="1">Belongs to the Maf family. YhdE subfamily.</text>
</comment>
<accession>Q3B3P0</accession>
<organism>
    <name type="scientific">Chlorobium luteolum (strain DSM 273 / BCRC 81028 / 2530)</name>
    <name type="common">Pelodictyon luteolum</name>
    <dbReference type="NCBI Taxonomy" id="319225"/>
    <lineage>
        <taxon>Bacteria</taxon>
        <taxon>Pseudomonadati</taxon>
        <taxon>Chlorobiota</taxon>
        <taxon>Chlorobiia</taxon>
        <taxon>Chlorobiales</taxon>
        <taxon>Chlorobiaceae</taxon>
        <taxon>Chlorobium/Pelodictyon group</taxon>
        <taxon>Pelodictyon</taxon>
    </lineage>
</organism>